<feature type="signal peptide" evidence="1">
    <location>
        <begin position="1"/>
        <end position="30"/>
    </location>
</feature>
<feature type="chain" id="PRO_0000435271" description="Conglutin beta 2">
    <location>
        <begin position="31"/>
        <end position="533"/>
    </location>
</feature>
<feature type="propeptide" id="PRO_0000435272" evidence="5 7">
    <location>
        <begin position="31"/>
        <end position="108"/>
    </location>
</feature>
<feature type="chain" id="PRO_0000435273" description="Blad" evidence="5">
    <location>
        <begin position="109"/>
        <end position="281"/>
    </location>
</feature>
<feature type="domain" description="Cupin type-1 1" evidence="1">
    <location>
        <begin position="115"/>
        <end position="273"/>
    </location>
</feature>
<feature type="domain" description="Cupin type-1 2" evidence="1">
    <location>
        <begin position="332"/>
        <end position="494"/>
    </location>
</feature>
<feature type="region of interest" description="Disordered" evidence="3">
    <location>
        <begin position="37"/>
        <end position="123"/>
    </location>
</feature>
<feature type="region of interest" description="Disordered" evidence="3">
    <location>
        <begin position="315"/>
        <end position="337"/>
    </location>
</feature>
<feature type="region of interest" description="Disordered" evidence="3">
    <location>
        <begin position="503"/>
        <end position="533"/>
    </location>
</feature>
<feature type="compositionally biased region" description="Basic and acidic residues" evidence="3">
    <location>
        <begin position="37"/>
        <end position="51"/>
    </location>
</feature>
<feature type="compositionally biased region" description="Basic and acidic residues" evidence="3">
    <location>
        <begin position="79"/>
        <end position="99"/>
    </location>
</feature>
<feature type="glycosylation site" description="N-linked (GlcNAc...) asparagine" evidence="2">
    <location>
        <position position="363"/>
    </location>
</feature>
<feature type="glycosylation site" description="N-linked (GlcNAc...) asparagine" evidence="2">
    <location>
        <position position="444"/>
    </location>
</feature>
<accession>Q6EBC1</accession>
<accession>Q0R0N3</accession>
<name>CONB2_LUPAL</name>
<protein>
    <recommendedName>
        <fullName evidence="10">Conglutin beta 2</fullName>
    </recommendedName>
    <allergenName evidence="8">Lup an 1</allergenName>
    <component>
        <recommendedName>
            <fullName evidence="9">Blad</fullName>
        </recommendedName>
    </component>
</protein>
<sequence>MGKMRVRFPTLVLVLGIVFLMAVSIGIAYGEKDVLKSHERPEEREQEEWQPRRQRPQSRREEREQEQEQGSPSYPRRQSGYERRQYHERSEQREEREQEQQQGSPSYSRRQRNPYHFSSQRFQTLYKNRNGKIRVLERFDQRTNRLENLQNYRIVEFQSKPNTLILPKHSDADYVLVVLNGRATITIVNPDRRQAYNLEYGDALRIPAGSTSYILNPDDNQKLRVVKLAIPINNPGYFYDFYPSSTKDQQSYFSGFSRNTLEATFNTRYEEIQRIILGNEDEQEYEEQRRGQEQSDQDEGVIVIVSKKQIQKLTKHAQSSSGKDKPSDSGPFNLRSNEPIYSNKYGNFYEITPDRNPQVQDLNISLTYIKINEGALLLPHYNSKAIYVVVVDEGEGNYELVGIRDQQRQQDEQEEKEEEVIRYSARLSEGDIFVIPAGYPISINASSNLRLLGFGINADENQRNFLAGSKDNVIRQLDRAVNELTFPGSAEDIERLIKNQQQSYFANGQPQQQQQQQSEKEGRRGRRGSSLPF</sequence>
<proteinExistence type="evidence at protein level"/>
<reference key="1">
    <citation type="submission" date="2003-12" db="EMBL/GenBank/DDBJ databases">
        <title>The lectin-like breakdown product of beta-conglutin catabolism. Studies on its origin.</title>
        <authorList>
            <person name="Monteiro S.A."/>
            <person name="Freitas R.M."/>
            <person name="Teixeira A.N."/>
            <person name="Ferreira R.B."/>
        </authorList>
    </citation>
    <scope>NUCLEOTIDE SEQUENCE [MRNA]</scope>
</reference>
<reference key="2">
    <citation type="journal article" date="2010" name="PLoS ONE">
        <title>The unique biosynthetic route from lupinus beta-conglutin gene to blad.</title>
        <authorList>
            <person name="Monteiro S."/>
            <person name="Freitas R."/>
            <person name="Rajasekhar B.T."/>
            <person name="Teixeira A.R."/>
            <person name="Ferreira R.B."/>
        </authorList>
    </citation>
    <scope>NUCLEOTIDE SEQUENCE [MRNA] OF 109-281</scope>
    <scope>PROTEIN SEQUENCE OF 109-145 AND 277-281</scope>
    <scope>SUBUNIT</scope>
</reference>
<reference key="3">
    <citation type="journal article" date="1997" name="Planta">
        <title>Accumulation of a lectin-like breakdown product of beta-conglutin catabolism in cotyledons of germinating Lupinus albus L. seeds.</title>
        <authorList>
            <person name="dos Ramos P.C."/>
            <person name="Ferreira R.M."/>
            <person name="Franco E."/>
            <person name="Teixeira A.R."/>
        </authorList>
    </citation>
    <scope>PROTEIN SEQUENCE OF 113-131</scope>
    <scope>FUNCTION (BLAD)</scope>
    <scope>DEVELOPMENTAL STAGE (BLAD)</scope>
</reference>
<reference key="4">
    <citation type="journal article" date="2008" name="J. Agric. Food Chem.">
        <title>Proteomic analysis of lupin seed proteins to identify conglutin Beta as an allergen, Lup an 1.</title>
        <authorList>
            <person name="Goggin D.E."/>
            <person name="Mir G."/>
            <person name="Smith W.B."/>
            <person name="Stuckey M."/>
            <person name="Smith P.M."/>
        </authorList>
    </citation>
    <scope>ALLERGEN</scope>
    <scope>IDENTIFICATION BY MASS SPECTROMETRY</scope>
</reference>
<reference key="5">
    <citation type="journal article" date="2010" name="Mol. Nutr. Food Res.">
        <title>Characterization of lupin major allergens (Lupinus albus L.).</title>
        <authorList>
            <person name="Guillamon E."/>
            <person name="Rodriguez J."/>
            <person name="Burbano C."/>
            <person name="Muzquiz M."/>
            <person name="Pedrosa M.M."/>
            <person name="Cabanillas B."/>
            <person name="Crespo J.F."/>
            <person name="Sancho A.I."/>
            <person name="Mills E.N."/>
            <person name="Cuadrado C."/>
        </authorList>
    </citation>
    <scope>ALLERGEN</scope>
</reference>
<organism evidence="13">
    <name type="scientific">Lupinus albus</name>
    <name type="common">White lupine</name>
    <name type="synonym">Lupinus termis</name>
    <dbReference type="NCBI Taxonomy" id="3870"/>
    <lineage>
        <taxon>Eukaryota</taxon>
        <taxon>Viridiplantae</taxon>
        <taxon>Streptophyta</taxon>
        <taxon>Embryophyta</taxon>
        <taxon>Tracheophyta</taxon>
        <taxon>Spermatophyta</taxon>
        <taxon>Magnoliopsida</taxon>
        <taxon>eudicotyledons</taxon>
        <taxon>Gunneridae</taxon>
        <taxon>Pentapetalae</taxon>
        <taxon>rosids</taxon>
        <taxon>fabids</taxon>
        <taxon>Fabales</taxon>
        <taxon>Fabaceae</taxon>
        <taxon>Papilionoideae</taxon>
        <taxon>50 kb inversion clade</taxon>
        <taxon>genistoids sensu lato</taxon>
        <taxon>core genistoids</taxon>
        <taxon>Genisteae</taxon>
        <taxon>Lupinus</taxon>
    </lineage>
</organism>
<keyword id="KW-0020">Allergen</keyword>
<keyword id="KW-0903">Direct protein sequencing</keyword>
<keyword id="KW-0325">Glycoprotein</keyword>
<keyword id="KW-0708">Seed storage protein</keyword>
<keyword id="KW-0732">Signal</keyword>
<keyword id="KW-0758">Storage protein</keyword>
<comment type="function">
    <text>Seed storage protein. Accumulates during seed development and is hydrolyzed after germination to provide a carbon and nitrogen source for the developing seedling.</text>
</comment>
<comment type="function">
    <molecule>Blad</molecule>
    <text evidence="7">Has a lectin-like activity.</text>
</comment>
<comment type="subunit">
    <text evidence="5">Multimers. Give rise to a complex array of processed forms, due to a large number of processing sites and changes in glycosylation.</text>
</comment>
<comment type="developmental stage">
    <molecule>Blad</molecule>
    <text evidence="7">Sudden accumulation in cotyledons of 4-day-old plants, but rapidly disappears about 12-14 days after the onset of germination.</text>
</comment>
<comment type="allergen">
    <text evidence="4 6">Causes an allergic reaction in human. Lup an 1 is the major lupin allergen.</text>
</comment>
<comment type="miscellaneous">
    <text evidence="5">Conglutin beta is characterized by a broad microheterogeneity with almost a continuum of polypeptides ranging in molecular mass from 15 to 72 KDa. Blad, the major 20 KDa polypeptide, may be considered as a stable, intermediary product of conglutin beta catabolism.</text>
</comment>
<comment type="miscellaneous">
    <text evidence="12">The initial characterization of blad (PubMed:9299789) was made on a seed storage protein extract containing both conglutin beta 1 and 2.</text>
</comment>
<comment type="similarity">
    <text evidence="11">Belongs to the 7S seed storage protein family.</text>
</comment>
<evidence type="ECO:0000255" key="1"/>
<evidence type="ECO:0000255" key="2">
    <source>
        <dbReference type="PROSITE-ProRule" id="PRU00498"/>
    </source>
</evidence>
<evidence type="ECO:0000256" key="3">
    <source>
        <dbReference type="SAM" id="MobiDB-lite"/>
    </source>
</evidence>
<evidence type="ECO:0000269" key="4">
    <source>
    </source>
</evidence>
<evidence type="ECO:0000269" key="5">
    <source>
    </source>
</evidence>
<evidence type="ECO:0000269" key="6">
    <source>
    </source>
</evidence>
<evidence type="ECO:0000269" key="7">
    <source>
    </source>
</evidence>
<evidence type="ECO:0000303" key="8">
    <source>
    </source>
</evidence>
<evidence type="ECO:0000303" key="9">
    <source>
    </source>
</evidence>
<evidence type="ECO:0000303" key="10">
    <source ref="1"/>
</evidence>
<evidence type="ECO:0000305" key="11"/>
<evidence type="ECO:0000305" key="12">
    <source>
    </source>
</evidence>
<evidence type="ECO:0000312" key="13">
    <source>
        <dbReference type="EMBL" id="AAS97865.1"/>
    </source>
</evidence>
<dbReference type="EMBL" id="AY500372">
    <property type="protein sequence ID" value="AAS97865.1"/>
    <property type="molecule type" value="mRNA"/>
</dbReference>
<dbReference type="EMBL" id="DQ142920">
    <property type="protein sequence ID" value="ABB13526.1"/>
    <property type="molecule type" value="mRNA"/>
</dbReference>
<dbReference type="SMR" id="Q6EBC1"/>
<dbReference type="Allergome" id="3818">
    <property type="allergen name" value="Lup a 1"/>
</dbReference>
<dbReference type="GO" id="GO:0045735">
    <property type="term" value="F:nutrient reservoir activity"/>
    <property type="evidence" value="ECO:0007669"/>
    <property type="project" value="UniProtKB-KW"/>
</dbReference>
<dbReference type="CDD" id="cd02245">
    <property type="entry name" value="cupin_7S_vicilin-like_C"/>
    <property type="match status" value="1"/>
</dbReference>
<dbReference type="CDD" id="cd02244">
    <property type="entry name" value="cupin_7S_vicilin-like_N"/>
    <property type="match status" value="1"/>
</dbReference>
<dbReference type="Gene3D" id="2.60.120.10">
    <property type="entry name" value="Jelly Rolls"/>
    <property type="match status" value="2"/>
</dbReference>
<dbReference type="InterPro" id="IPR006045">
    <property type="entry name" value="Cupin_1"/>
</dbReference>
<dbReference type="InterPro" id="IPR014710">
    <property type="entry name" value="RmlC-like_jellyroll"/>
</dbReference>
<dbReference type="InterPro" id="IPR011051">
    <property type="entry name" value="RmlC_Cupin_sf"/>
</dbReference>
<dbReference type="InterPro" id="IPR050253">
    <property type="entry name" value="Seed_Storage-Functional"/>
</dbReference>
<dbReference type="PANTHER" id="PTHR31189">
    <property type="entry name" value="OS03G0336100 PROTEIN-RELATED"/>
    <property type="match status" value="1"/>
</dbReference>
<dbReference type="PANTHER" id="PTHR31189:SF41">
    <property type="entry name" value="VICILIN C72"/>
    <property type="match status" value="1"/>
</dbReference>
<dbReference type="Pfam" id="PF00190">
    <property type="entry name" value="Cupin_1"/>
    <property type="match status" value="1"/>
</dbReference>
<dbReference type="SMART" id="SM00835">
    <property type="entry name" value="Cupin_1"/>
    <property type="match status" value="2"/>
</dbReference>
<dbReference type="SUPFAM" id="SSF51182">
    <property type="entry name" value="RmlC-like cupins"/>
    <property type="match status" value="1"/>
</dbReference>